<name>CAAD_ASPNC</name>
<feature type="chain" id="PRO_0000462135" description="2-oxoglutarate-dependent dioxygenase caaD">
    <location>
        <begin position="1"/>
        <end position="322"/>
    </location>
</feature>
<feature type="domain" description="Fe2OG dioxygenase" evidence="1">
    <location>
        <begin position="172"/>
        <end position="279"/>
    </location>
</feature>
<feature type="binding site" evidence="1">
    <location>
        <position position="200"/>
    </location>
    <ligand>
        <name>Fe cation</name>
        <dbReference type="ChEBI" id="CHEBI:24875"/>
    </ligand>
</feature>
<feature type="binding site" evidence="1">
    <location>
        <position position="202"/>
    </location>
    <ligand>
        <name>Fe cation</name>
        <dbReference type="ChEBI" id="CHEBI:24875"/>
    </ligand>
</feature>
<feature type="binding site" evidence="1">
    <location>
        <position position="259"/>
    </location>
    <ligand>
        <name>Fe cation</name>
        <dbReference type="ChEBI" id="CHEBI:24875"/>
    </ligand>
</feature>
<feature type="binding site" evidence="1">
    <location>
        <position position="269"/>
    </location>
    <ligand>
        <name>2-oxoglutarate</name>
        <dbReference type="ChEBI" id="CHEBI:16810"/>
    </ligand>
</feature>
<accession>A2QQU4</accession>
<sequence>MTVTKIEIPTIDLRGYYEPTSPTSKEEVVAQVRAACLEHGFFQIEGHGVSLEVQRNMLAACKTFFDLPTDQKAELSLYKNTWRRGYEGYGEQTPHHAVLPDQKEAFFVGRDLPEDQIGFLKGPNVWPEQVPTNQFRGPVEEYFEALLKLGHRVMEVLVVGMGHPPSILDSFTGNAAMFLKLLRYPEHTFTDPRVFGSGAHTDYGGLTILLQDPGKHGLEVYHAATEQWIPVPAVEDRFVINLGDMVQRWTDGEYKSNLHRVLNKASGERFAVPAFWHGDLEATNPLNPNDTSGETVQDFIRKKFYRDYSLPLAEEKGTAVAV</sequence>
<organism>
    <name type="scientific">Aspergillus niger (strain ATCC MYA-4892 / CBS 513.88 / FGSC A1513)</name>
    <dbReference type="NCBI Taxonomy" id="425011"/>
    <lineage>
        <taxon>Eukaryota</taxon>
        <taxon>Fungi</taxon>
        <taxon>Dikarya</taxon>
        <taxon>Ascomycota</taxon>
        <taxon>Pezizomycotina</taxon>
        <taxon>Eurotiomycetes</taxon>
        <taxon>Eurotiomycetidae</taxon>
        <taxon>Eurotiales</taxon>
        <taxon>Aspergillaceae</taxon>
        <taxon>Aspergillus</taxon>
        <taxon>Aspergillus subgen. Circumdati</taxon>
    </lineage>
</organism>
<protein>
    <recommendedName>
        <fullName evidence="3">2-oxoglutarate-dependent dioxygenase caaD</fullName>
        <ecNumber evidence="5">1.14.-.-</ecNumber>
    </recommendedName>
    <alternativeName>
        <fullName evidence="3">Carlosic acid biosynthesis cluster protein D</fullName>
    </alternativeName>
</protein>
<keyword id="KW-0223">Dioxygenase</keyword>
<keyword id="KW-0408">Iron</keyword>
<keyword id="KW-0479">Metal-binding</keyword>
<keyword id="KW-0560">Oxidoreductase</keyword>
<keyword id="KW-1185">Reference proteome</keyword>
<comment type="function">
    <text evidence="2">2-oxoglutarate-dependent dioxygenase; part of the gene cluster that produces the acyltetronic acid derivatives carlosic acid, agglomerin F and carlosic acid methyl ether (PubMed:25044953). CaaD catalyzes the sequential oxidations of the terminal C-10 methyl group of the caaC product to form carboxylic acid which is necessary for the biosynthesis of agglomerin F (PubMed:25044953).</text>
</comment>
<comment type="cofactor">
    <cofactor evidence="1">
        <name>Fe(2+)</name>
        <dbReference type="ChEBI" id="CHEBI:29033"/>
    </cofactor>
    <text evidence="1">Binds 1 Fe(2+) ion per subunit.</text>
</comment>
<comment type="pathway">
    <text evidence="2">Secondary metabolite biosynthesis.</text>
</comment>
<comment type="induction">
    <text evidence="2">Expression is positively regulated by the cluster-specific transcription factor caaR.</text>
</comment>
<comment type="similarity">
    <text evidence="4">Belongs to the iron/ascorbate-dependent oxidoreductase family.</text>
</comment>
<proteinExistence type="evidence at transcript level"/>
<reference key="1">
    <citation type="journal article" date="2007" name="Nat. Biotechnol.">
        <title>Genome sequencing and analysis of the versatile cell factory Aspergillus niger CBS 513.88.</title>
        <authorList>
            <person name="Pel H.J."/>
            <person name="de Winde J.H."/>
            <person name="Archer D.B."/>
            <person name="Dyer P.S."/>
            <person name="Hofmann G."/>
            <person name="Schaap P.J."/>
            <person name="Turner G."/>
            <person name="de Vries R.P."/>
            <person name="Albang R."/>
            <person name="Albermann K."/>
            <person name="Andersen M.R."/>
            <person name="Bendtsen J.D."/>
            <person name="Benen J.A.E."/>
            <person name="van den Berg M."/>
            <person name="Breestraat S."/>
            <person name="Caddick M.X."/>
            <person name="Contreras R."/>
            <person name="Cornell M."/>
            <person name="Coutinho P.M."/>
            <person name="Danchin E.G.J."/>
            <person name="Debets A.J.M."/>
            <person name="Dekker P."/>
            <person name="van Dijck P.W.M."/>
            <person name="van Dijk A."/>
            <person name="Dijkhuizen L."/>
            <person name="Driessen A.J.M."/>
            <person name="d'Enfert C."/>
            <person name="Geysens S."/>
            <person name="Goosen C."/>
            <person name="Groot G.S.P."/>
            <person name="de Groot P.W.J."/>
            <person name="Guillemette T."/>
            <person name="Henrissat B."/>
            <person name="Herweijer M."/>
            <person name="van den Hombergh J.P.T.W."/>
            <person name="van den Hondel C.A.M.J.J."/>
            <person name="van der Heijden R.T.J.M."/>
            <person name="van der Kaaij R.M."/>
            <person name="Klis F.M."/>
            <person name="Kools H.J."/>
            <person name="Kubicek C.P."/>
            <person name="van Kuyk P.A."/>
            <person name="Lauber J."/>
            <person name="Lu X."/>
            <person name="van der Maarel M.J.E.C."/>
            <person name="Meulenberg R."/>
            <person name="Menke H."/>
            <person name="Mortimer M.A."/>
            <person name="Nielsen J."/>
            <person name="Oliver S.G."/>
            <person name="Olsthoorn M."/>
            <person name="Pal K."/>
            <person name="van Peij N.N.M.E."/>
            <person name="Ram A.F.J."/>
            <person name="Rinas U."/>
            <person name="Roubos J.A."/>
            <person name="Sagt C.M.J."/>
            <person name="Schmoll M."/>
            <person name="Sun J."/>
            <person name="Ussery D."/>
            <person name="Varga J."/>
            <person name="Vervecken W."/>
            <person name="van de Vondervoort P.J.J."/>
            <person name="Wedler H."/>
            <person name="Woesten H.A.B."/>
            <person name="Zeng A.-P."/>
            <person name="van Ooyen A.J.J."/>
            <person name="Visser J."/>
            <person name="Stam H."/>
        </authorList>
    </citation>
    <scope>NUCLEOTIDE SEQUENCE [LARGE SCALE GENOMIC DNA]</scope>
    <source>
        <strain>ATCC MYA-4892 / CBS 513.88 / FGSC A1513</strain>
    </source>
</reference>
<reference key="2">
    <citation type="journal article" date="2014" name="ChemBioChem">
        <title>Three acyltetronic acid derivatives: noncanonical cryptic polyketides from Aspergillus niger identified by genome mining.</title>
        <authorList>
            <person name="Yang X.L."/>
            <person name="Awakawa T."/>
            <person name="Wakimoto T."/>
            <person name="Abe I."/>
        </authorList>
    </citation>
    <scope>FUNCTION</scope>
    <scope>INDUCTION</scope>
    <scope>PATHWAY</scope>
</reference>
<gene>
    <name evidence="3" type="primary">caaD</name>
    <name type="ORF">An08g03730</name>
</gene>
<evidence type="ECO:0000255" key="1">
    <source>
        <dbReference type="PROSITE-ProRule" id="PRU00805"/>
    </source>
</evidence>
<evidence type="ECO:0000269" key="2">
    <source>
    </source>
</evidence>
<evidence type="ECO:0000303" key="3">
    <source>
    </source>
</evidence>
<evidence type="ECO:0000305" key="4"/>
<evidence type="ECO:0000305" key="5">
    <source>
    </source>
</evidence>
<dbReference type="EC" id="1.14.-.-" evidence="5"/>
<dbReference type="EMBL" id="AM270165">
    <property type="protein sequence ID" value="CAK45410.1"/>
    <property type="molecule type" value="Genomic_DNA"/>
</dbReference>
<dbReference type="RefSeq" id="XP_001392490.1">
    <property type="nucleotide sequence ID" value="XM_001392453.1"/>
</dbReference>
<dbReference type="EnsemblFungi" id="CAK45410">
    <property type="protein sequence ID" value="CAK45410"/>
    <property type="gene ID" value="An08g03730"/>
</dbReference>
<dbReference type="GeneID" id="4982688"/>
<dbReference type="KEGG" id="ang:An08g03730"/>
<dbReference type="VEuPathDB" id="FungiDB:An08g03730"/>
<dbReference type="HOGENOM" id="CLU_010119_6_3_1"/>
<dbReference type="OrthoDB" id="1380829at2759"/>
<dbReference type="Proteomes" id="UP000006706">
    <property type="component" value="Chromosome 8R"/>
</dbReference>
<dbReference type="GO" id="GO:0046872">
    <property type="term" value="F:metal ion binding"/>
    <property type="evidence" value="ECO:0007669"/>
    <property type="project" value="UniProtKB-KW"/>
</dbReference>
<dbReference type="GO" id="GO:0016491">
    <property type="term" value="F:oxidoreductase activity"/>
    <property type="evidence" value="ECO:0007669"/>
    <property type="project" value="UniProtKB-KW"/>
</dbReference>
<dbReference type="GO" id="GO:0044283">
    <property type="term" value="P:small molecule biosynthetic process"/>
    <property type="evidence" value="ECO:0007669"/>
    <property type="project" value="UniProtKB-ARBA"/>
</dbReference>
<dbReference type="Gene3D" id="2.60.120.330">
    <property type="entry name" value="B-lactam Antibiotic, Isopenicillin N Synthase, Chain"/>
    <property type="match status" value="1"/>
</dbReference>
<dbReference type="InterPro" id="IPR026992">
    <property type="entry name" value="DIOX_N"/>
</dbReference>
<dbReference type="InterPro" id="IPR044861">
    <property type="entry name" value="IPNS-like_FE2OG_OXY"/>
</dbReference>
<dbReference type="InterPro" id="IPR027443">
    <property type="entry name" value="IPNS-like_sf"/>
</dbReference>
<dbReference type="InterPro" id="IPR050231">
    <property type="entry name" value="Iron_ascorbate_oxido_reductase"/>
</dbReference>
<dbReference type="InterPro" id="IPR005123">
    <property type="entry name" value="Oxoglu/Fe-dep_dioxygenase_dom"/>
</dbReference>
<dbReference type="PANTHER" id="PTHR47990">
    <property type="entry name" value="2-OXOGLUTARATE (2OG) AND FE(II)-DEPENDENT OXYGENASE SUPERFAMILY PROTEIN-RELATED"/>
    <property type="match status" value="1"/>
</dbReference>
<dbReference type="Pfam" id="PF03171">
    <property type="entry name" value="2OG-FeII_Oxy"/>
    <property type="match status" value="1"/>
</dbReference>
<dbReference type="Pfam" id="PF14226">
    <property type="entry name" value="DIOX_N"/>
    <property type="match status" value="1"/>
</dbReference>
<dbReference type="SUPFAM" id="SSF51197">
    <property type="entry name" value="Clavaminate synthase-like"/>
    <property type="match status" value="1"/>
</dbReference>
<dbReference type="PROSITE" id="PS51471">
    <property type="entry name" value="FE2OG_OXY"/>
    <property type="match status" value="1"/>
</dbReference>